<dbReference type="EMBL" id="AL939120">
    <property type="protein sequence ID" value="CAB77410.1"/>
    <property type="molecule type" value="Genomic_DNA"/>
</dbReference>
<dbReference type="RefSeq" id="NP_628797.1">
    <property type="nucleotide sequence ID" value="NC_003888.3"/>
</dbReference>
<dbReference type="RefSeq" id="WP_011029784.1">
    <property type="nucleotide sequence ID" value="NZ_CP042324.1"/>
</dbReference>
<dbReference type="SMR" id="Q9L0M4"/>
<dbReference type="STRING" id="100226.gene:17762284"/>
<dbReference type="PaxDb" id="100226-SCO4636"/>
<dbReference type="KEGG" id="sco:SCO4636"/>
<dbReference type="PATRIC" id="fig|100226.15.peg.4707"/>
<dbReference type="eggNOG" id="COG2030">
    <property type="taxonomic scope" value="Bacteria"/>
</dbReference>
<dbReference type="HOGENOM" id="CLU_116276_0_0_11"/>
<dbReference type="InParanoid" id="Q9L0M4"/>
<dbReference type="OrthoDB" id="5415111at2"/>
<dbReference type="PhylomeDB" id="Q9L0M4"/>
<dbReference type="BRENDA" id="4.2.1.59">
    <property type="organism ID" value="5998"/>
</dbReference>
<dbReference type="Proteomes" id="UP000001973">
    <property type="component" value="Chromosome"/>
</dbReference>
<dbReference type="GO" id="GO:0019171">
    <property type="term" value="F:(3R)-hydroxyacyl-[acyl-carrier-protein] dehydratase activity"/>
    <property type="evidence" value="ECO:0000318"/>
    <property type="project" value="GO_Central"/>
</dbReference>
<dbReference type="GO" id="GO:0006633">
    <property type="term" value="P:fatty acid biosynthetic process"/>
    <property type="evidence" value="ECO:0000318"/>
    <property type="project" value="GO_Central"/>
</dbReference>
<dbReference type="CDD" id="cd03441">
    <property type="entry name" value="R_hydratase_like"/>
    <property type="match status" value="1"/>
</dbReference>
<dbReference type="Gene3D" id="3.10.129.10">
    <property type="entry name" value="Hotdog Thioesterase"/>
    <property type="match status" value="1"/>
</dbReference>
<dbReference type="HAMAP" id="MF_00799">
    <property type="entry name" value="UPF0336"/>
    <property type="match status" value="1"/>
</dbReference>
<dbReference type="InterPro" id="IPR039569">
    <property type="entry name" value="FAS1-like_DH_region"/>
</dbReference>
<dbReference type="InterPro" id="IPR016709">
    <property type="entry name" value="HadA-like"/>
</dbReference>
<dbReference type="InterPro" id="IPR029069">
    <property type="entry name" value="HotDog_dom_sf"/>
</dbReference>
<dbReference type="InterPro" id="IPR050965">
    <property type="entry name" value="UPF0336/Enoyl-CoA_hydratase"/>
</dbReference>
<dbReference type="PANTHER" id="PTHR43437:SF3">
    <property type="entry name" value="HYDROXYACYL-THIOESTER DEHYDRATASE TYPE 2, MITOCHONDRIAL"/>
    <property type="match status" value="1"/>
</dbReference>
<dbReference type="PANTHER" id="PTHR43437">
    <property type="entry name" value="HYDROXYACYL-THIOESTER DEHYDRATASE TYPE 2, MITOCHONDRIAL-RELATED"/>
    <property type="match status" value="1"/>
</dbReference>
<dbReference type="Pfam" id="PF13452">
    <property type="entry name" value="FAS1_DH_region"/>
    <property type="match status" value="1"/>
</dbReference>
<dbReference type="PIRSF" id="PIRSF018072">
    <property type="entry name" value="UCP018072"/>
    <property type="match status" value="1"/>
</dbReference>
<dbReference type="SUPFAM" id="SSF54637">
    <property type="entry name" value="Thioesterase/thiol ester dehydrase-isomerase"/>
    <property type="match status" value="1"/>
</dbReference>
<feature type="chain" id="PRO_0000216147" description="UPF0336 protein SCO4636">
    <location>
        <begin position="1"/>
        <end position="150"/>
    </location>
</feature>
<feature type="domain" description="MaoC-like">
    <location>
        <begin position="8"/>
        <end position="116"/>
    </location>
</feature>
<gene>
    <name type="ordered locus">SCO4636</name>
    <name type="ORF">SCD82.07</name>
</gene>
<organism>
    <name type="scientific">Streptomyces coelicolor (strain ATCC BAA-471 / A3(2) / M145)</name>
    <dbReference type="NCBI Taxonomy" id="100226"/>
    <lineage>
        <taxon>Bacteria</taxon>
        <taxon>Bacillati</taxon>
        <taxon>Actinomycetota</taxon>
        <taxon>Actinomycetes</taxon>
        <taxon>Kitasatosporales</taxon>
        <taxon>Streptomycetaceae</taxon>
        <taxon>Streptomyces</taxon>
        <taxon>Streptomyces albidoflavus group</taxon>
    </lineage>
</organism>
<sequence length="150" mass="16152">MALDQSLVGRSYPPTAPYEVGREKIREFAEAVGDANPAYTDAEAAKALGHPDVIAPPTFVFSITFKAAGQVIEDPQLGLDYSRVVHGDQKFSYARPVRAGDRLTVTSTIEAIKSMAGNDILDIRGEVHDEAGEHVVTAWTKLVARAAEEA</sequence>
<accession>Q9L0M4</accession>
<protein>
    <recommendedName>
        <fullName evidence="1">UPF0336 protein SCO4636</fullName>
    </recommendedName>
</protein>
<name>Y4636_STRCO</name>
<evidence type="ECO:0000255" key="1">
    <source>
        <dbReference type="HAMAP-Rule" id="MF_00799"/>
    </source>
</evidence>
<proteinExistence type="inferred from homology"/>
<reference key="1">
    <citation type="journal article" date="2002" name="Nature">
        <title>Complete genome sequence of the model actinomycete Streptomyces coelicolor A3(2).</title>
        <authorList>
            <person name="Bentley S.D."/>
            <person name="Chater K.F."/>
            <person name="Cerdeno-Tarraga A.-M."/>
            <person name="Challis G.L."/>
            <person name="Thomson N.R."/>
            <person name="James K.D."/>
            <person name="Harris D.E."/>
            <person name="Quail M.A."/>
            <person name="Kieser H."/>
            <person name="Harper D."/>
            <person name="Bateman A."/>
            <person name="Brown S."/>
            <person name="Chandra G."/>
            <person name="Chen C.W."/>
            <person name="Collins M."/>
            <person name="Cronin A."/>
            <person name="Fraser A."/>
            <person name="Goble A."/>
            <person name="Hidalgo J."/>
            <person name="Hornsby T."/>
            <person name="Howarth S."/>
            <person name="Huang C.-H."/>
            <person name="Kieser T."/>
            <person name="Larke L."/>
            <person name="Murphy L.D."/>
            <person name="Oliver K."/>
            <person name="O'Neil S."/>
            <person name="Rabbinowitsch E."/>
            <person name="Rajandream M.A."/>
            <person name="Rutherford K.M."/>
            <person name="Rutter S."/>
            <person name="Seeger K."/>
            <person name="Saunders D."/>
            <person name="Sharp S."/>
            <person name="Squares R."/>
            <person name="Squares S."/>
            <person name="Taylor K."/>
            <person name="Warren T."/>
            <person name="Wietzorrek A."/>
            <person name="Woodward J.R."/>
            <person name="Barrell B.G."/>
            <person name="Parkhill J."/>
            <person name="Hopwood D.A."/>
        </authorList>
    </citation>
    <scope>NUCLEOTIDE SEQUENCE [LARGE SCALE GENOMIC DNA]</scope>
    <source>
        <strain>ATCC BAA-471 / A3(2) / M145</strain>
    </source>
</reference>
<comment type="similarity">
    <text evidence="1">Belongs to the UPF0336 family.</text>
</comment>
<keyword id="KW-1185">Reference proteome</keyword>